<dbReference type="EC" id="7.1.1.-" evidence="1"/>
<dbReference type="EMBL" id="CP000301">
    <property type="protein sequence ID" value="ABD87956.1"/>
    <property type="molecule type" value="Genomic_DNA"/>
</dbReference>
<dbReference type="SMR" id="Q215I0"/>
<dbReference type="STRING" id="316056.RPC_2404"/>
<dbReference type="KEGG" id="rpc:RPC_2404"/>
<dbReference type="eggNOG" id="COG0649">
    <property type="taxonomic scope" value="Bacteria"/>
</dbReference>
<dbReference type="HOGENOM" id="CLU_015134_1_1_5"/>
<dbReference type="OrthoDB" id="9801496at2"/>
<dbReference type="GO" id="GO:0005886">
    <property type="term" value="C:plasma membrane"/>
    <property type="evidence" value="ECO:0007669"/>
    <property type="project" value="UniProtKB-SubCell"/>
</dbReference>
<dbReference type="GO" id="GO:0051287">
    <property type="term" value="F:NAD binding"/>
    <property type="evidence" value="ECO:0007669"/>
    <property type="project" value="InterPro"/>
</dbReference>
<dbReference type="GO" id="GO:0050136">
    <property type="term" value="F:NADH:ubiquinone reductase (non-electrogenic) activity"/>
    <property type="evidence" value="ECO:0007669"/>
    <property type="project" value="UniProtKB-UniRule"/>
</dbReference>
<dbReference type="GO" id="GO:0048038">
    <property type="term" value="F:quinone binding"/>
    <property type="evidence" value="ECO:0007669"/>
    <property type="project" value="UniProtKB-KW"/>
</dbReference>
<dbReference type="FunFam" id="1.10.645.10:FF:000005">
    <property type="entry name" value="NADH-quinone oxidoreductase subunit D"/>
    <property type="match status" value="1"/>
</dbReference>
<dbReference type="Gene3D" id="1.10.645.10">
    <property type="entry name" value="Cytochrome-c3 Hydrogenase, chain B"/>
    <property type="match status" value="1"/>
</dbReference>
<dbReference type="HAMAP" id="MF_01358">
    <property type="entry name" value="NDH1_NuoD"/>
    <property type="match status" value="1"/>
</dbReference>
<dbReference type="InterPro" id="IPR001135">
    <property type="entry name" value="NADH_Q_OxRdtase_suD"/>
</dbReference>
<dbReference type="InterPro" id="IPR014029">
    <property type="entry name" value="NADH_UbQ_OxRdtase_49kDa_CS"/>
</dbReference>
<dbReference type="InterPro" id="IPR022885">
    <property type="entry name" value="NDH1_su_D/H"/>
</dbReference>
<dbReference type="InterPro" id="IPR029014">
    <property type="entry name" value="NiFe-Hase_large"/>
</dbReference>
<dbReference type="NCBIfam" id="TIGR01962">
    <property type="entry name" value="NuoD"/>
    <property type="match status" value="1"/>
</dbReference>
<dbReference type="NCBIfam" id="NF004739">
    <property type="entry name" value="PRK06075.1"/>
    <property type="match status" value="1"/>
</dbReference>
<dbReference type="PANTHER" id="PTHR11993:SF10">
    <property type="entry name" value="NADH DEHYDROGENASE [UBIQUINONE] IRON-SULFUR PROTEIN 2, MITOCHONDRIAL"/>
    <property type="match status" value="1"/>
</dbReference>
<dbReference type="PANTHER" id="PTHR11993">
    <property type="entry name" value="NADH-UBIQUINONE OXIDOREDUCTASE 49 KDA SUBUNIT"/>
    <property type="match status" value="1"/>
</dbReference>
<dbReference type="Pfam" id="PF00346">
    <property type="entry name" value="Complex1_49kDa"/>
    <property type="match status" value="1"/>
</dbReference>
<dbReference type="SUPFAM" id="SSF56762">
    <property type="entry name" value="HydB/Nqo4-like"/>
    <property type="match status" value="1"/>
</dbReference>
<dbReference type="PROSITE" id="PS00535">
    <property type="entry name" value="COMPLEX1_49K"/>
    <property type="match status" value="1"/>
</dbReference>
<feature type="chain" id="PRO_0000357905" description="NADH-quinone oxidoreductase subunit D">
    <location>
        <begin position="1"/>
        <end position="396"/>
    </location>
</feature>
<evidence type="ECO:0000255" key="1">
    <source>
        <dbReference type="HAMAP-Rule" id="MF_01358"/>
    </source>
</evidence>
<name>NUOD_RHOPB</name>
<gene>
    <name evidence="1" type="primary">nuoD</name>
    <name type="ordered locus">RPC_2404</name>
</gene>
<keyword id="KW-0997">Cell inner membrane</keyword>
<keyword id="KW-1003">Cell membrane</keyword>
<keyword id="KW-0472">Membrane</keyword>
<keyword id="KW-0520">NAD</keyword>
<keyword id="KW-0874">Quinone</keyword>
<keyword id="KW-1278">Translocase</keyword>
<keyword id="KW-0813">Transport</keyword>
<keyword id="KW-0830">Ubiquinone</keyword>
<proteinExistence type="inferred from homology"/>
<sequence length="396" mass="44631">MPEGALRNFTINFGPQHPAAHGVLRLVLELDGEIVERVDPHIGLLHRGTEKLIEAKTYLQAIPYFDRLDYVAPMNQEHAFCLAAEKLLDIAVPRRAQLIRVLYCEIGRILSHLLNVTTQAMDVGALTPPLWGFEEREKLMMFYERASGSRMHAAYFRVGGVHQDLPPKLVDDIEAWCVAFPQVIDDLDRLLTGNRIFKQRNVDIGVVTLAQAWEWGFSGVMVRGSGAAWDLRKSQPYECYAELEFDIPIGKNGDCYDRYCIRMEEMRQSVRIMQQCIAKLRAPDGGGPVAVQDNKIFPPRRGEMKRSMESLIHHFKLYTEGFRVPAGEVYVAVEAPKGEFGVFLVSDGSNKPYKCKIRAPGFAHLQAMDFISRGHLLADVSAILGSLDIVFGEVDR</sequence>
<protein>
    <recommendedName>
        <fullName evidence="1">NADH-quinone oxidoreductase subunit D</fullName>
        <ecNumber evidence="1">7.1.1.-</ecNumber>
    </recommendedName>
    <alternativeName>
        <fullName evidence="1">NADH dehydrogenase I subunit D</fullName>
    </alternativeName>
    <alternativeName>
        <fullName evidence="1">NDH-1 subunit D</fullName>
    </alternativeName>
</protein>
<comment type="function">
    <text evidence="1">NDH-1 shuttles electrons from NADH, via FMN and iron-sulfur (Fe-S) centers, to quinones in the respiratory chain. The immediate electron acceptor for the enzyme in this species is believed to be ubiquinone. Couples the redox reaction to proton translocation (for every two electrons transferred, four hydrogen ions are translocated across the cytoplasmic membrane), and thus conserves the redox energy in a proton gradient.</text>
</comment>
<comment type="catalytic activity">
    <reaction evidence="1">
        <text>a quinone + NADH + 5 H(+)(in) = a quinol + NAD(+) + 4 H(+)(out)</text>
        <dbReference type="Rhea" id="RHEA:57888"/>
        <dbReference type="ChEBI" id="CHEBI:15378"/>
        <dbReference type="ChEBI" id="CHEBI:24646"/>
        <dbReference type="ChEBI" id="CHEBI:57540"/>
        <dbReference type="ChEBI" id="CHEBI:57945"/>
        <dbReference type="ChEBI" id="CHEBI:132124"/>
    </reaction>
</comment>
<comment type="subunit">
    <text evidence="1">NDH-1 is composed of 14 different subunits. Subunits NuoB, C, D, E, F, and G constitute the peripheral sector of the complex.</text>
</comment>
<comment type="subcellular location">
    <subcellularLocation>
        <location evidence="1">Cell inner membrane</location>
        <topology evidence="1">Peripheral membrane protein</topology>
        <orientation evidence="1">Cytoplasmic side</orientation>
    </subcellularLocation>
</comment>
<comment type="similarity">
    <text evidence="1">Belongs to the complex I 49 kDa subunit family.</text>
</comment>
<accession>Q215I0</accession>
<reference key="1">
    <citation type="submission" date="2006-03" db="EMBL/GenBank/DDBJ databases">
        <title>Complete sequence of Rhodopseudomonas palustris BisB18.</title>
        <authorList>
            <consortium name="US DOE Joint Genome Institute"/>
            <person name="Copeland A."/>
            <person name="Lucas S."/>
            <person name="Lapidus A."/>
            <person name="Barry K."/>
            <person name="Detter J.C."/>
            <person name="Glavina del Rio T."/>
            <person name="Hammon N."/>
            <person name="Israni S."/>
            <person name="Dalin E."/>
            <person name="Tice H."/>
            <person name="Pitluck S."/>
            <person name="Chain P."/>
            <person name="Malfatti S."/>
            <person name="Shin M."/>
            <person name="Vergez L."/>
            <person name="Schmutz J."/>
            <person name="Larimer F."/>
            <person name="Land M."/>
            <person name="Hauser L."/>
            <person name="Pelletier D.A."/>
            <person name="Kyrpides N."/>
            <person name="Anderson I."/>
            <person name="Oda Y."/>
            <person name="Harwood C.S."/>
            <person name="Richardson P."/>
        </authorList>
    </citation>
    <scope>NUCLEOTIDE SEQUENCE [LARGE SCALE GENOMIC DNA]</scope>
    <source>
        <strain>BisB18</strain>
    </source>
</reference>
<organism>
    <name type="scientific">Rhodopseudomonas palustris (strain BisB18)</name>
    <dbReference type="NCBI Taxonomy" id="316056"/>
    <lineage>
        <taxon>Bacteria</taxon>
        <taxon>Pseudomonadati</taxon>
        <taxon>Pseudomonadota</taxon>
        <taxon>Alphaproteobacteria</taxon>
        <taxon>Hyphomicrobiales</taxon>
        <taxon>Nitrobacteraceae</taxon>
        <taxon>Rhodopseudomonas</taxon>
    </lineage>
</organism>